<protein>
    <recommendedName>
        <fullName evidence="5">Asparagine--oxo-acid transaminase</fullName>
        <ecNumber evidence="4">2.6.1.14</ecNumber>
    </recommendedName>
    <alternativeName>
        <fullName evidence="7">Asparagine:2-oxoglutarate aminotransferase</fullName>
    </alternativeName>
</protein>
<keyword id="KW-0032">Aminotransferase</keyword>
<keyword id="KW-0663">Pyridoxal phosphate</keyword>
<keyword id="KW-1185">Reference proteome</keyword>
<keyword id="KW-0808">Transferase</keyword>
<reference key="1">
    <citation type="journal article" date="2002" name="Proc. Natl. Acad. Sci. U.S.A.">
        <title>Genome sequence of Streptococcus mutans UA159, a cariogenic dental pathogen.</title>
        <authorList>
            <person name="Ajdic D.J."/>
            <person name="McShan W.M."/>
            <person name="McLaughlin R.E."/>
            <person name="Savic G."/>
            <person name="Chang J."/>
            <person name="Carson M.B."/>
            <person name="Primeaux C."/>
            <person name="Tian R."/>
            <person name="Kenton S."/>
            <person name="Jia H.G."/>
            <person name="Lin S.P."/>
            <person name="Qian Y."/>
            <person name="Li S."/>
            <person name="Zhu H."/>
            <person name="Najar F.Z."/>
            <person name="Lai H."/>
            <person name="White J."/>
            <person name="Roe B.A."/>
            <person name="Ferretti J.J."/>
        </authorList>
    </citation>
    <scope>NUCLEOTIDE SEQUENCE [LARGE SCALE GENOMIC DNA]</scope>
    <source>
        <strain>ATCC 700610 / UA159</strain>
    </source>
</reference>
<reference key="2">
    <citation type="journal article" date="2012" name="Mol. Syst. Biol.">
        <title>Prediction and identification of sequences coding for orphan enzymes using genomic and metagenomic neighbours.</title>
        <authorList>
            <person name="Yamada T."/>
            <person name="Waller A.S."/>
            <person name="Raes J."/>
            <person name="Zelezniak A."/>
            <person name="Perchat N."/>
            <person name="Perret A."/>
            <person name="Salanoubat M."/>
            <person name="Patil K.R."/>
            <person name="Weissenbach J."/>
            <person name="Bork P."/>
        </authorList>
    </citation>
    <scope>FUNCTION</scope>
    <scope>CATALYTIC ACTIVITY</scope>
    <scope>COFACTOR</scope>
    <source>
        <strain>ATCC 25175 / DSM 20523 / JCM 5705 / NBRC 13955 / NCIMB 702062 / NCTC 10449</strain>
    </source>
</reference>
<gene>
    <name evidence="8" type="primary">aspB</name>
    <name evidence="8" type="ordered locus">SMU_1312</name>
</gene>
<evidence type="ECO:0000250" key="1"/>
<evidence type="ECO:0000250" key="2">
    <source>
        <dbReference type="UniProtKB" id="Q56232"/>
    </source>
</evidence>
<evidence type="ECO:0000255" key="3">
    <source>
        <dbReference type="RuleBase" id="RU000481"/>
    </source>
</evidence>
<evidence type="ECO:0000269" key="4">
    <source>
    </source>
</evidence>
<evidence type="ECO:0000303" key="5">
    <source>
    </source>
</evidence>
<evidence type="ECO:0000305" key="6"/>
<evidence type="ECO:0000305" key="7">
    <source>
    </source>
</evidence>
<evidence type="ECO:0000312" key="8">
    <source>
        <dbReference type="EMBL" id="AAN58989.1"/>
    </source>
</evidence>
<name>NOAT_STRMU</name>
<feature type="chain" id="PRO_0000439796" description="Asparagine--oxo-acid transaminase">
    <location>
        <begin position="1"/>
        <end position="393"/>
    </location>
</feature>
<feature type="binding site" evidence="1">
    <location>
        <position position="39"/>
    </location>
    <ligand>
        <name>L-asparagine</name>
        <dbReference type="ChEBI" id="CHEBI:58048"/>
    </ligand>
</feature>
<feature type="binding site" evidence="2">
    <location>
        <position position="126"/>
    </location>
    <ligand>
        <name>L-asparagine</name>
        <dbReference type="ChEBI" id="CHEBI:58048"/>
    </ligand>
</feature>
<feature type="binding site" evidence="2">
    <location>
        <position position="176"/>
    </location>
    <ligand>
        <name>L-asparagine</name>
        <dbReference type="ChEBI" id="CHEBI:58048"/>
    </ligand>
</feature>
<feature type="binding site" evidence="2">
    <location>
        <position position="370"/>
    </location>
    <ligand>
        <name>L-asparagine</name>
        <dbReference type="ChEBI" id="CHEBI:58048"/>
    </ligand>
</feature>
<feature type="modified residue" description="N6-(pyridoxal phosphate)lysine" evidence="2">
    <location>
        <position position="239"/>
    </location>
</feature>
<organism>
    <name type="scientific">Streptococcus mutans serotype c (strain ATCC 700610 / UA159)</name>
    <dbReference type="NCBI Taxonomy" id="210007"/>
    <lineage>
        <taxon>Bacteria</taxon>
        <taxon>Bacillati</taxon>
        <taxon>Bacillota</taxon>
        <taxon>Bacilli</taxon>
        <taxon>Lactobacillales</taxon>
        <taxon>Streptococcaceae</taxon>
        <taxon>Streptococcus</taxon>
    </lineage>
</organism>
<dbReference type="EC" id="2.6.1.14" evidence="4"/>
<dbReference type="EMBL" id="AE014133">
    <property type="protein sequence ID" value="AAN58989.1"/>
    <property type="molecule type" value="Genomic_DNA"/>
</dbReference>
<dbReference type="RefSeq" id="NP_721683.1">
    <property type="nucleotide sequence ID" value="NC_004350.2"/>
</dbReference>
<dbReference type="RefSeq" id="WP_002263716.1">
    <property type="nucleotide sequence ID" value="NC_004350.2"/>
</dbReference>
<dbReference type="SMR" id="Q8DTM1"/>
<dbReference type="STRING" id="210007.SMU_1312"/>
<dbReference type="KEGG" id="smu:SMU_1312"/>
<dbReference type="PATRIC" id="fig|210007.7.peg.1176"/>
<dbReference type="eggNOG" id="COG0436">
    <property type="taxonomic scope" value="Bacteria"/>
</dbReference>
<dbReference type="HOGENOM" id="CLU_017584_4_3_9"/>
<dbReference type="OrthoDB" id="9802328at2"/>
<dbReference type="PhylomeDB" id="Q8DTM1"/>
<dbReference type="BRENDA" id="2.6.1.14">
    <property type="organism ID" value="14748"/>
</dbReference>
<dbReference type="Proteomes" id="UP000002512">
    <property type="component" value="Chromosome"/>
</dbReference>
<dbReference type="GO" id="GO:0047297">
    <property type="term" value="F:asparagine-oxo-acid transaminase activity"/>
    <property type="evidence" value="ECO:0000314"/>
    <property type="project" value="UniProtKB"/>
</dbReference>
<dbReference type="GO" id="GO:0030170">
    <property type="term" value="F:pyridoxal phosphate binding"/>
    <property type="evidence" value="ECO:0007669"/>
    <property type="project" value="InterPro"/>
</dbReference>
<dbReference type="GO" id="GO:0006520">
    <property type="term" value="P:amino acid metabolic process"/>
    <property type="evidence" value="ECO:0007669"/>
    <property type="project" value="InterPro"/>
</dbReference>
<dbReference type="GO" id="GO:0009058">
    <property type="term" value="P:biosynthetic process"/>
    <property type="evidence" value="ECO:0007669"/>
    <property type="project" value="InterPro"/>
</dbReference>
<dbReference type="CDD" id="cd00609">
    <property type="entry name" value="AAT_like"/>
    <property type="match status" value="1"/>
</dbReference>
<dbReference type="FunFam" id="3.40.640.10:FF:000033">
    <property type="entry name" value="Aspartate aminotransferase"/>
    <property type="match status" value="1"/>
</dbReference>
<dbReference type="Gene3D" id="3.90.1150.10">
    <property type="entry name" value="Aspartate Aminotransferase, domain 1"/>
    <property type="match status" value="1"/>
</dbReference>
<dbReference type="Gene3D" id="3.40.640.10">
    <property type="entry name" value="Type I PLP-dependent aspartate aminotransferase-like (Major domain)"/>
    <property type="match status" value="1"/>
</dbReference>
<dbReference type="InterPro" id="IPR004839">
    <property type="entry name" value="Aminotransferase_I/II_large"/>
</dbReference>
<dbReference type="InterPro" id="IPR050596">
    <property type="entry name" value="AspAT/PAT-like"/>
</dbReference>
<dbReference type="InterPro" id="IPR004838">
    <property type="entry name" value="NHTrfase_class1_PyrdxlP-BS"/>
</dbReference>
<dbReference type="InterPro" id="IPR015424">
    <property type="entry name" value="PyrdxlP-dep_Trfase"/>
</dbReference>
<dbReference type="InterPro" id="IPR015421">
    <property type="entry name" value="PyrdxlP-dep_Trfase_major"/>
</dbReference>
<dbReference type="InterPro" id="IPR015422">
    <property type="entry name" value="PyrdxlP-dep_Trfase_small"/>
</dbReference>
<dbReference type="PANTHER" id="PTHR46383">
    <property type="entry name" value="ASPARTATE AMINOTRANSFERASE"/>
    <property type="match status" value="1"/>
</dbReference>
<dbReference type="PANTHER" id="PTHR46383:SF1">
    <property type="entry name" value="ASPARTATE AMINOTRANSFERASE"/>
    <property type="match status" value="1"/>
</dbReference>
<dbReference type="Pfam" id="PF00155">
    <property type="entry name" value="Aminotran_1_2"/>
    <property type="match status" value="1"/>
</dbReference>
<dbReference type="PRINTS" id="PR00753">
    <property type="entry name" value="ACCSYNTHASE"/>
</dbReference>
<dbReference type="SUPFAM" id="SSF53383">
    <property type="entry name" value="PLP-dependent transferases"/>
    <property type="match status" value="1"/>
</dbReference>
<dbReference type="PROSITE" id="PS00105">
    <property type="entry name" value="AA_TRANSFER_CLASS_1"/>
    <property type="match status" value="1"/>
</dbReference>
<comment type="function">
    <text evidence="4 6">Catalyzes the transamination reaction between L-asparagine and 2-oxoglutarate to produce L-glutamate and 2-oxosuccinamate (PubMed:22569339). Is not active with pyruvate as amine acceptor (PubMed:22569339). May also use other amino acids as substrates.</text>
</comment>
<comment type="catalytic activity">
    <reaction evidence="4">
        <text>a 2-oxocarboxylate + L-asparagine = 2-oxosuccinamate + an L-alpha-amino acid</text>
        <dbReference type="Rhea" id="RHEA:19813"/>
        <dbReference type="ChEBI" id="CHEBI:35179"/>
        <dbReference type="ChEBI" id="CHEBI:57735"/>
        <dbReference type="ChEBI" id="CHEBI:58048"/>
        <dbReference type="ChEBI" id="CHEBI:59869"/>
        <dbReference type="EC" id="2.6.1.14"/>
    </reaction>
</comment>
<comment type="catalytic activity">
    <reaction evidence="4">
        <text>L-asparagine + 2-oxoglutarate = 2-oxosuccinamate + L-glutamate</text>
        <dbReference type="Rhea" id="RHEA:52528"/>
        <dbReference type="ChEBI" id="CHEBI:16810"/>
        <dbReference type="ChEBI" id="CHEBI:29985"/>
        <dbReference type="ChEBI" id="CHEBI:57735"/>
        <dbReference type="ChEBI" id="CHEBI:58048"/>
        <dbReference type="EC" id="2.6.1.14"/>
    </reaction>
</comment>
<comment type="cofactor">
    <cofactor evidence="3 7">
        <name>pyridoxal 5'-phosphate</name>
        <dbReference type="ChEBI" id="CHEBI:597326"/>
    </cofactor>
</comment>
<comment type="similarity">
    <text evidence="6">Belongs to the class-I pyridoxal-phosphate-dependent aminotransferase family.</text>
</comment>
<accession>Q8DTM1</accession>
<proteinExistence type="evidence at protein level"/>
<sequence length="393" mass="43501">MTKLSRRVLEMEESVTLATSARAKTLKAQGRDVLELSLGQPDFVTPKNIQEAAMKSIRDGRASFYTIASGLPELKDAISQYFEKFYGYSVERKQIVVGTGAKFILYALFAAVINPKDEVIIPTPFWVSYADQIKMNDGVPVFIRTSEENHFKATVEQLEAARTNKTKMIVLNSPSNPTGMIYSKKELEAIGNWAVKHDILILSDDIYGRLVYNGARFTPISTISQPICQQTIVINGVSKTYSMTGWRVGYAVGDPEIIGAMSKIVSQTTSNLTTAAQYAAIEALIGNQDTVEVMRQAFEERLNTIYPLLAKVPGFHVVKPEGAFYFFPNVKKAMEMKGYTDVTEFTTALLEETGVALVTGAGFGAPENVRLSYATDMVTLKEAINRIQAFMEK</sequence>